<reference key="1">
    <citation type="journal article" date="2006" name="BMC Plant Biol.">
        <title>Rapid and accurate pyrosequencing of angiosperm plastid genomes.</title>
        <authorList>
            <person name="Moore M.J."/>
            <person name="Dhingra A."/>
            <person name="Soltis P.S."/>
            <person name="Shaw R."/>
            <person name="Farmerie W.G."/>
            <person name="Folta K.M."/>
            <person name="Soltis D.E."/>
        </authorList>
    </citation>
    <scope>NUCLEOTIDE SEQUENCE [LARGE SCALE GENOMIC DNA]</scope>
</reference>
<gene>
    <name evidence="1" type="primary">clpP</name>
</gene>
<comment type="function">
    <text evidence="1">Cleaves peptides in various proteins in a process that requires ATP hydrolysis. Has a chymotrypsin-like activity. Plays a major role in the degradation of misfolded proteins.</text>
</comment>
<comment type="catalytic activity">
    <reaction evidence="1">
        <text>Hydrolysis of proteins to small peptides in the presence of ATP and magnesium. alpha-casein is the usual test substrate. In the absence of ATP, only oligopeptides shorter than five residues are hydrolyzed (such as succinyl-Leu-Tyr-|-NHMec, and Leu-Tyr-Leu-|-Tyr-Trp, in which cleavage of the -Tyr-|-Leu- and -Tyr-|-Trp bonds also occurs).</text>
        <dbReference type="EC" id="3.4.21.92"/>
    </reaction>
</comment>
<comment type="subunit">
    <text>Component of the chloroplastic Clp protease core complex.</text>
</comment>
<comment type="subcellular location">
    <subcellularLocation>
        <location evidence="1">Plastid</location>
        <location evidence="1">Chloroplast stroma</location>
    </subcellularLocation>
</comment>
<comment type="similarity">
    <text evidence="1">Belongs to the peptidase S14 family.</text>
</comment>
<keyword id="KW-0150">Chloroplast</keyword>
<keyword id="KW-0378">Hydrolase</keyword>
<keyword id="KW-0934">Plastid</keyword>
<keyword id="KW-0645">Protease</keyword>
<keyword id="KW-0720">Serine protease</keyword>
<proteinExistence type="inferred from homology"/>
<name>CLPP_PLAOC</name>
<geneLocation type="chloroplast"/>
<protein>
    <recommendedName>
        <fullName evidence="1">ATP-dependent Clp protease proteolytic subunit</fullName>
        <ecNumber evidence="1">3.4.21.92</ecNumber>
    </recommendedName>
    <alternativeName>
        <fullName evidence="1">Endopeptidase Clp</fullName>
    </alternativeName>
</protein>
<evidence type="ECO:0000255" key="1">
    <source>
        <dbReference type="HAMAP-Rule" id="MF_00444"/>
    </source>
</evidence>
<accession>Q09G21</accession>
<organism>
    <name type="scientific">Platanus occidentalis</name>
    <name type="common">Sycamore</name>
    <name type="synonym">American plane tree</name>
    <dbReference type="NCBI Taxonomy" id="4403"/>
    <lineage>
        <taxon>Eukaryota</taxon>
        <taxon>Viridiplantae</taxon>
        <taxon>Streptophyta</taxon>
        <taxon>Embryophyta</taxon>
        <taxon>Tracheophyta</taxon>
        <taxon>Spermatophyta</taxon>
        <taxon>Magnoliopsida</taxon>
        <taxon>Proteales</taxon>
        <taxon>Platanaceae</taxon>
        <taxon>Platanus</taxon>
    </lineage>
</organism>
<feature type="chain" id="PRO_0000309310" description="ATP-dependent Clp protease proteolytic subunit">
    <location>
        <begin position="1"/>
        <end position="202"/>
    </location>
</feature>
<feature type="active site" description="Nucleophile" evidence="1">
    <location>
        <position position="101"/>
    </location>
</feature>
<feature type="active site" evidence="1">
    <location>
        <position position="126"/>
    </location>
</feature>
<sequence length="202" mass="22647">MPIGVPKVPFRSPGEEDAIWVDVYNRLHRERLLFLGQEVDSEISNQLIGLMVYLSIEDDTRDLYLFINSPGGWVIPGIAIYDTMQFVPPDVHTICMGLAASMGSFILVGGEITKRLAFPHARVMIHQPASSFYEAQTGEFILEAEELLKLRETLTRVYVQRTGNPLWVVSEDMERDVFMSATEAQAHGIVDLVAVENSGDFT</sequence>
<dbReference type="EC" id="3.4.21.92" evidence="1"/>
<dbReference type="EMBL" id="DQ923116">
    <property type="protein sequence ID" value="ABI49804.1"/>
    <property type="molecule type" value="Genomic_DNA"/>
</dbReference>
<dbReference type="RefSeq" id="YP_740590.1">
    <property type="nucleotide sequence ID" value="NC_008335.1"/>
</dbReference>
<dbReference type="SMR" id="Q09G21"/>
<dbReference type="MEROPS" id="S14.002"/>
<dbReference type="GeneID" id="4271253"/>
<dbReference type="GO" id="GO:0009570">
    <property type="term" value="C:chloroplast stroma"/>
    <property type="evidence" value="ECO:0007669"/>
    <property type="project" value="UniProtKB-SubCell"/>
</dbReference>
<dbReference type="GO" id="GO:0009368">
    <property type="term" value="C:endopeptidase Clp complex"/>
    <property type="evidence" value="ECO:0007669"/>
    <property type="project" value="TreeGrafter"/>
</dbReference>
<dbReference type="GO" id="GO:0004176">
    <property type="term" value="F:ATP-dependent peptidase activity"/>
    <property type="evidence" value="ECO:0007669"/>
    <property type="project" value="InterPro"/>
</dbReference>
<dbReference type="GO" id="GO:0051117">
    <property type="term" value="F:ATPase binding"/>
    <property type="evidence" value="ECO:0007669"/>
    <property type="project" value="TreeGrafter"/>
</dbReference>
<dbReference type="GO" id="GO:0004252">
    <property type="term" value="F:serine-type endopeptidase activity"/>
    <property type="evidence" value="ECO:0007669"/>
    <property type="project" value="UniProtKB-UniRule"/>
</dbReference>
<dbReference type="GO" id="GO:0006515">
    <property type="term" value="P:protein quality control for misfolded or incompletely synthesized proteins"/>
    <property type="evidence" value="ECO:0007669"/>
    <property type="project" value="TreeGrafter"/>
</dbReference>
<dbReference type="CDD" id="cd07017">
    <property type="entry name" value="S14_ClpP_2"/>
    <property type="match status" value="1"/>
</dbReference>
<dbReference type="FunFam" id="3.90.226.10:FF:000006">
    <property type="entry name" value="ATP-dependent Clp protease proteolytic subunit"/>
    <property type="match status" value="1"/>
</dbReference>
<dbReference type="Gene3D" id="3.90.226.10">
    <property type="entry name" value="2-enoyl-CoA Hydratase, Chain A, domain 1"/>
    <property type="match status" value="1"/>
</dbReference>
<dbReference type="HAMAP" id="MF_00444">
    <property type="entry name" value="ClpP"/>
    <property type="match status" value="1"/>
</dbReference>
<dbReference type="InterPro" id="IPR001907">
    <property type="entry name" value="ClpP"/>
</dbReference>
<dbReference type="InterPro" id="IPR029045">
    <property type="entry name" value="ClpP/crotonase-like_dom_sf"/>
</dbReference>
<dbReference type="InterPro" id="IPR023562">
    <property type="entry name" value="ClpP/TepA"/>
</dbReference>
<dbReference type="InterPro" id="IPR033135">
    <property type="entry name" value="ClpP_His_AS"/>
</dbReference>
<dbReference type="InterPro" id="IPR018215">
    <property type="entry name" value="ClpP_Ser_AS"/>
</dbReference>
<dbReference type="PANTHER" id="PTHR10381">
    <property type="entry name" value="ATP-DEPENDENT CLP PROTEASE PROTEOLYTIC SUBUNIT"/>
    <property type="match status" value="1"/>
</dbReference>
<dbReference type="PANTHER" id="PTHR10381:SF15">
    <property type="entry name" value="CHLOROPLASTIC ATP-DEPENDENT CLP PROTEASE PROTEOLYTIC SUBUNIT 1"/>
    <property type="match status" value="1"/>
</dbReference>
<dbReference type="Pfam" id="PF00574">
    <property type="entry name" value="CLP_protease"/>
    <property type="match status" value="1"/>
</dbReference>
<dbReference type="PRINTS" id="PR00127">
    <property type="entry name" value="CLPPROTEASEP"/>
</dbReference>
<dbReference type="SUPFAM" id="SSF52096">
    <property type="entry name" value="ClpP/crotonase"/>
    <property type="match status" value="1"/>
</dbReference>
<dbReference type="PROSITE" id="PS00382">
    <property type="entry name" value="CLP_PROTEASE_HIS"/>
    <property type="match status" value="1"/>
</dbReference>
<dbReference type="PROSITE" id="PS00381">
    <property type="entry name" value="CLP_PROTEASE_SER"/>
    <property type="match status" value="1"/>
</dbReference>